<comment type="function">
    <text evidence="2 3">Involved in the biosynthesis of the nodulation enhancer compound rhizobitoxine. Catalyzes the final step of the pathway, the introduction of a carbon double bond into the C3 position of dihydrorhizobitoxine to produce rhizobitoxine.</text>
</comment>
<comment type="catalytic activity">
    <reaction evidence="6 7">
        <text>dihydrorhizobitoxine + 2 reduced [2Fe-2S]-[ferredoxin] + O2 + 2 H(+) = rhizobitoxine + 2 oxidized [2Fe-2S]-[ferredoxin] + 2 H2O</text>
        <dbReference type="Rhea" id="RHEA:56684"/>
        <dbReference type="Rhea" id="RHEA-COMP:10000"/>
        <dbReference type="Rhea" id="RHEA-COMP:10001"/>
        <dbReference type="ChEBI" id="CHEBI:15377"/>
        <dbReference type="ChEBI" id="CHEBI:15378"/>
        <dbReference type="ChEBI" id="CHEBI:15379"/>
        <dbReference type="ChEBI" id="CHEBI:33737"/>
        <dbReference type="ChEBI" id="CHEBI:33738"/>
        <dbReference type="ChEBI" id="CHEBI:140641"/>
        <dbReference type="ChEBI" id="CHEBI:140642"/>
        <dbReference type="EC" id="1.14.19.61"/>
    </reaction>
    <physiologicalReaction direction="left-to-right" evidence="6 7">
        <dbReference type="Rhea" id="RHEA:56685"/>
    </physiologicalReaction>
</comment>
<comment type="subcellular location">
    <subcellularLocation>
        <location evidence="5">Cell inner membrane</location>
        <topology evidence="1">Multi-pass membrane protein</topology>
    </subcellularLocation>
</comment>
<comment type="disruption phenotype">
    <text evidence="2 3">Mutant can produce serinol and dihydrorhizobitoxine, but not rhizobitoxine (PubMed:11679318, PubMed:14711685). Mutant produces no symptoms of foliar chlorosis on G.max cv. Lee and does not accumulate rhizobitoxine in the nodules or upper shoots (PubMed:14711685). It shows significantly less nodulation competitiveness than the wild-type strain on M.atropurpureum (PubMed:14711685).</text>
</comment>
<comment type="similarity">
    <text evidence="5">Belongs to the fatty acid desaturase type 1 family.</text>
</comment>
<gene>
    <name evidence="4" type="primary">rtxC</name>
    <name evidence="8" type="ORF">BEL01nite_69950</name>
    <name evidence="10" type="ORF">FBF72_28720</name>
    <name evidence="9" type="ORF">JOH49_009324</name>
</gene>
<evidence type="ECO:0000255" key="1"/>
<evidence type="ECO:0000269" key="2">
    <source>
    </source>
</evidence>
<evidence type="ECO:0000269" key="3">
    <source>
    </source>
</evidence>
<evidence type="ECO:0000303" key="4">
    <source>
    </source>
</evidence>
<evidence type="ECO:0000305" key="5"/>
<evidence type="ECO:0000305" key="6">
    <source>
    </source>
</evidence>
<evidence type="ECO:0000305" key="7">
    <source>
    </source>
</evidence>
<evidence type="ECO:0000312" key="8">
    <source>
        <dbReference type="EMBL" id="GEC57952.1"/>
    </source>
</evidence>
<evidence type="ECO:0000312" key="9">
    <source>
        <dbReference type="EMBL" id="MBP1299571.1"/>
    </source>
</evidence>
<evidence type="ECO:0000312" key="10">
    <source>
        <dbReference type="EMBL" id="NWL71962.1"/>
    </source>
</evidence>
<protein>
    <recommendedName>
        <fullName evidence="4">Dihydrorhizobitoxine desaturase</fullName>
        <ecNumber evidence="6 7">1.14.19.61</ecNumber>
    </recommendedName>
</protein>
<name>RTXC_BRAEL</name>
<sequence length="352" mass="40461">MNQADAWKLRSSRYEAVQFSREINKQLSELRPDNVMGAIYIAKDYAVIAACTLATLCVSWWLYPLAVLLIGAYQRGLTTIAHDAAHRTLAKNTTWNYVLGILFAAYPLFQRHWAYRISHVYLHHPYLGDPEKDPDLKFFMANGVYDVQPPKRYAFNIIWKPIFGGATLAYLKYLWTNRFSITDSEDQSRSSILVDKYGFYLFWIGILAGSYALGLLHIVILFWIVPYLTTFQVLGWFVELAEHSPMCESETKNVYLTRNRKGNFLERAILGQNLDEYHLEHHLSPGIPFWLLHKAQKIRMQDPGYAKVAASWGGLFVKGPQGQPSVITQLKERNRRLYEQSLADAHAKGHVA</sequence>
<feature type="chain" id="PRO_0000454506" description="Dihydrorhizobitoxine desaturase">
    <location>
        <begin position="1"/>
        <end position="352"/>
    </location>
</feature>
<feature type="transmembrane region" description="Helical" evidence="1">
    <location>
        <begin position="53"/>
        <end position="73"/>
    </location>
</feature>
<feature type="transmembrane region" description="Helical" evidence="1">
    <location>
        <begin position="89"/>
        <end position="109"/>
    </location>
</feature>
<feature type="transmembrane region" description="Helical" evidence="1">
    <location>
        <begin position="204"/>
        <end position="224"/>
    </location>
</feature>
<dbReference type="EC" id="1.14.19.61" evidence="6 7"/>
<dbReference type="EMBL" id="AB062279">
    <property type="protein sequence ID" value="BAB55901.1"/>
    <property type="molecule type" value="Genomic_DNA"/>
</dbReference>
<dbReference type="EMBL" id="BJNL01000074">
    <property type="protein sequence ID" value="GEC57952.1"/>
    <property type="molecule type" value="Genomic_DNA"/>
</dbReference>
<dbReference type="EMBL" id="SWAO01000075">
    <property type="protein sequence ID" value="NWL71962.1"/>
    <property type="molecule type" value="Genomic_DNA"/>
</dbReference>
<dbReference type="EMBL" id="JAFICZ010000001">
    <property type="protein sequence ID" value="MBP1299571.1"/>
    <property type="molecule type" value="Genomic_DNA"/>
</dbReference>
<dbReference type="RefSeq" id="WP_016841944.1">
    <property type="nucleotide sequence ID" value="NZ_BJNL01000074.1"/>
</dbReference>
<dbReference type="GeneID" id="92956705"/>
<dbReference type="KEGG" id="ag:BAB55901"/>
<dbReference type="BioCyc" id="MetaCyc:MONOMER-20271"/>
<dbReference type="BRENDA" id="1.14.19.61">
    <property type="organism ID" value="9755"/>
</dbReference>
<dbReference type="Proteomes" id="UP000673383">
    <property type="component" value="Unassembled WGS sequence"/>
</dbReference>
<dbReference type="GO" id="GO:0005886">
    <property type="term" value="C:plasma membrane"/>
    <property type="evidence" value="ECO:0007669"/>
    <property type="project" value="UniProtKB-SubCell"/>
</dbReference>
<dbReference type="GO" id="GO:0016717">
    <property type="term" value="F:oxidoreductase activity, acting on paired donors, with oxidation of a pair of donors resulting in the reduction of molecular oxygen to two molecules of water"/>
    <property type="evidence" value="ECO:0007669"/>
    <property type="project" value="TreeGrafter"/>
</dbReference>
<dbReference type="GO" id="GO:0008610">
    <property type="term" value="P:lipid biosynthetic process"/>
    <property type="evidence" value="ECO:0007669"/>
    <property type="project" value="UniProtKB-ARBA"/>
</dbReference>
<dbReference type="CDD" id="cd03510">
    <property type="entry name" value="Rhizobitoxine-FADS-like"/>
    <property type="match status" value="1"/>
</dbReference>
<dbReference type="InterPro" id="IPR005804">
    <property type="entry name" value="FA_desaturase_dom"/>
</dbReference>
<dbReference type="InterPro" id="IPR012171">
    <property type="entry name" value="Fatty_acid_desaturase"/>
</dbReference>
<dbReference type="PANTHER" id="PTHR19353:SF19">
    <property type="entry name" value="DELTA(5) FATTY ACID DESATURASE C-RELATED"/>
    <property type="match status" value="1"/>
</dbReference>
<dbReference type="PANTHER" id="PTHR19353">
    <property type="entry name" value="FATTY ACID DESATURASE 2"/>
    <property type="match status" value="1"/>
</dbReference>
<dbReference type="Pfam" id="PF00487">
    <property type="entry name" value="FA_desaturase"/>
    <property type="match status" value="1"/>
</dbReference>
<organism>
    <name type="scientific">Bradyrhizobium elkanii</name>
    <dbReference type="NCBI Taxonomy" id="29448"/>
    <lineage>
        <taxon>Bacteria</taxon>
        <taxon>Pseudomonadati</taxon>
        <taxon>Pseudomonadota</taxon>
        <taxon>Alphaproteobacteria</taxon>
        <taxon>Hyphomicrobiales</taxon>
        <taxon>Nitrobacteraceae</taxon>
        <taxon>Bradyrhizobium</taxon>
    </lineage>
</organism>
<accession>Q93HS4</accession>
<reference key="1">
    <citation type="journal article" date="2001" name="Appl. Environ. Microbiol.">
        <title>DNA sequence and mutational analysis of rhizobitoxine biosynthesis genes in Bradyrhizobium elkanii.</title>
        <authorList>
            <person name="Yasuta T."/>
            <person name="Okazaki S."/>
            <person name="Mitsui H."/>
            <person name="Yuhashi K."/>
            <person name="Ezura H."/>
            <person name="Minamisawa K."/>
        </authorList>
    </citation>
    <scope>NUCLEOTIDE SEQUENCE [GENOMIC DNA]</scope>
    <scope>FUNCTION</scope>
    <scope>CATALYTIC ACTIVITY</scope>
    <scope>DISRUPTION PHENOTYPE</scope>
    <source>
        <strain>USDA94</strain>
    </source>
</reference>
<reference key="2">
    <citation type="submission" date="2019-04" db="EMBL/GenBank/DDBJ databases">
        <title>Genome of Bradyrhizobium elkanii SEMIA 587.</title>
        <authorList>
            <person name="Ambrosini A."/>
            <person name="Guzman F."/>
            <person name="Sant'Anna F.H."/>
            <person name="Passaglia L.M.P."/>
        </authorList>
    </citation>
    <scope>NUCLEOTIDE SEQUENCE [LARGE SCALE GENOMIC DNA]</scope>
    <source>
        <strain>SEMIA 587</strain>
    </source>
</reference>
<reference key="3">
    <citation type="submission" date="2019-06" db="EMBL/GenBank/DDBJ databases">
        <title>Whole genome shotgun sequence of Bradyrhizobium elkanii NBRC 14791.</title>
        <authorList>
            <person name="Hosoyama A."/>
            <person name="Uohara A."/>
            <person name="Ohji S."/>
            <person name="Ichikawa N."/>
        </authorList>
    </citation>
    <scope>NUCLEOTIDE SEQUENCE [LARGE SCALE GENOMIC DNA]</scope>
    <source>
        <strain>NBRC 14791</strain>
    </source>
</reference>
<reference key="4">
    <citation type="submission" date="2021-02" db="EMBL/GenBank/DDBJ databases">
        <title>Genomic Encyclopedia of Type Strains, Phase IV (KMG-V): Genome sequencing to study the core and pangenomes of soil and plant-associated prokaryotes.</title>
        <authorList>
            <person name="Whitman W."/>
            <person name="Huntemann M."/>
            <person name="Clum A."/>
            <person name="Spunde A."/>
            <person name="Palaniappan K."/>
            <person name="Ritter S."/>
            <person name="Mikhailova N."/>
            <person name="Chen I.-M."/>
            <person name="Stamatis D."/>
            <person name="Reddy T."/>
            <person name="O'Malley R."/>
            <person name="Daum C."/>
            <person name="Shapiro N."/>
            <person name="Ivanova N."/>
            <person name="Kyrpides N."/>
            <person name="Woyke T."/>
        </authorList>
    </citation>
    <scope>NUCLEOTIDE SEQUENCE [LARGE SCALE GENOMIC DNA]</scope>
    <source>
        <strain>USDA 406</strain>
    </source>
</reference>
<reference key="5">
    <citation type="journal article" date="2004" name="Appl. Environ. Microbiol.">
        <title>Bradyrhizobium elkanii rtxC gene is required for expression of symbiotic phenotypes in the final step of rhizobitoxine biosynthesis.</title>
        <authorList>
            <person name="Okazaki S."/>
            <person name="Sugawara M."/>
            <person name="Minamisawa K."/>
        </authorList>
    </citation>
    <scope>FUNCTION</scope>
    <scope>CATALYTIC ACTIVITY</scope>
    <scope>DISRUPTION PHENOTYPE</scope>
    <source>
        <strain>USDA94</strain>
    </source>
</reference>
<keyword id="KW-0997">Cell inner membrane</keyword>
<keyword id="KW-1003">Cell membrane</keyword>
<keyword id="KW-0472">Membrane</keyword>
<keyword id="KW-0560">Oxidoreductase</keyword>
<keyword id="KW-0812">Transmembrane</keyword>
<keyword id="KW-1133">Transmembrane helix</keyword>
<proteinExistence type="evidence at protein level"/>